<sequence>MDKENFTRLRGELFCDHPLARYTSWRVGGKAERFYRPADLFDLQDFLTQLPSDEPLTWLGLGSNVLIRDGGIKGTVILTLNRLKELSVVNSQLVFREKSGTEDFFSGNGKTIIRAEAGVTCAKLAKFCVSQGLEDGAFFAGIPGTVGGALAMNAGAFGGETWRTVIGVETMNHQGEILKRTPDEFKIHYRQVEGLENQFFIAGYFCFNHGDPDKAKTAINALLKKRNLSQPIGKYSCGSVFRNPPGDYAARLIESAGLKGKSIGNAEVSEKHANFILNKGNASAADIEALIHYVAQHVSQIHGIQLVKEVHIIGRS</sequence>
<comment type="function">
    <text evidence="1">Cell wall formation.</text>
</comment>
<comment type="catalytic activity">
    <reaction evidence="1">
        <text>UDP-N-acetyl-alpha-D-muramate + NADP(+) = UDP-N-acetyl-3-O-(1-carboxyvinyl)-alpha-D-glucosamine + NADPH + H(+)</text>
        <dbReference type="Rhea" id="RHEA:12248"/>
        <dbReference type="ChEBI" id="CHEBI:15378"/>
        <dbReference type="ChEBI" id="CHEBI:57783"/>
        <dbReference type="ChEBI" id="CHEBI:58349"/>
        <dbReference type="ChEBI" id="CHEBI:68483"/>
        <dbReference type="ChEBI" id="CHEBI:70757"/>
        <dbReference type="EC" id="1.3.1.98"/>
    </reaction>
</comment>
<comment type="cofactor">
    <cofactor evidence="1">
        <name>FAD</name>
        <dbReference type="ChEBI" id="CHEBI:57692"/>
    </cofactor>
</comment>
<comment type="pathway">
    <text evidence="1">Cell wall biogenesis; peptidoglycan biosynthesis.</text>
</comment>
<comment type="subcellular location">
    <subcellularLocation>
        <location evidence="1">Cytoplasm</location>
    </subcellularLocation>
</comment>
<comment type="similarity">
    <text evidence="1">Belongs to the MurB family.</text>
</comment>
<evidence type="ECO:0000255" key="1">
    <source>
        <dbReference type="HAMAP-Rule" id="MF_00037"/>
    </source>
</evidence>
<keyword id="KW-0131">Cell cycle</keyword>
<keyword id="KW-0132">Cell division</keyword>
<keyword id="KW-0133">Cell shape</keyword>
<keyword id="KW-0961">Cell wall biogenesis/degradation</keyword>
<keyword id="KW-0963">Cytoplasm</keyword>
<keyword id="KW-0274">FAD</keyword>
<keyword id="KW-0285">Flavoprotein</keyword>
<keyword id="KW-0521">NADP</keyword>
<keyword id="KW-0560">Oxidoreductase</keyword>
<keyword id="KW-0573">Peptidoglycan synthesis</keyword>
<proteinExistence type="inferred from homology"/>
<reference key="1">
    <citation type="submission" date="2007-11" db="EMBL/GenBank/DDBJ databases">
        <title>Genome sequencing of phylogenetically and phenotypically diverse Coxiella burnetii isolates.</title>
        <authorList>
            <person name="Seshadri R."/>
            <person name="Samuel J.E."/>
        </authorList>
    </citation>
    <scope>NUCLEOTIDE SEQUENCE [LARGE SCALE GENOMIC DNA]</scope>
    <source>
        <strain>RSA 331 / Henzerling II</strain>
    </source>
</reference>
<dbReference type="EC" id="1.3.1.98" evidence="1"/>
<dbReference type="EMBL" id="CP000890">
    <property type="protein sequence ID" value="ABX78468.1"/>
    <property type="molecule type" value="Genomic_DNA"/>
</dbReference>
<dbReference type="RefSeq" id="WP_010957398.1">
    <property type="nucleotide sequence ID" value="NC_010117.1"/>
</dbReference>
<dbReference type="SMR" id="A9NA46"/>
<dbReference type="KEGG" id="cbs:COXBURSA331_A0226"/>
<dbReference type="HOGENOM" id="CLU_035304_1_0_6"/>
<dbReference type="UniPathway" id="UPA00219"/>
<dbReference type="GO" id="GO:0005829">
    <property type="term" value="C:cytosol"/>
    <property type="evidence" value="ECO:0007669"/>
    <property type="project" value="TreeGrafter"/>
</dbReference>
<dbReference type="GO" id="GO:0071949">
    <property type="term" value="F:FAD binding"/>
    <property type="evidence" value="ECO:0007669"/>
    <property type="project" value="InterPro"/>
</dbReference>
<dbReference type="GO" id="GO:0008762">
    <property type="term" value="F:UDP-N-acetylmuramate dehydrogenase activity"/>
    <property type="evidence" value="ECO:0007669"/>
    <property type="project" value="UniProtKB-UniRule"/>
</dbReference>
<dbReference type="GO" id="GO:0051301">
    <property type="term" value="P:cell division"/>
    <property type="evidence" value="ECO:0007669"/>
    <property type="project" value="UniProtKB-KW"/>
</dbReference>
<dbReference type="GO" id="GO:0071555">
    <property type="term" value="P:cell wall organization"/>
    <property type="evidence" value="ECO:0007669"/>
    <property type="project" value="UniProtKB-KW"/>
</dbReference>
<dbReference type="GO" id="GO:0009252">
    <property type="term" value="P:peptidoglycan biosynthetic process"/>
    <property type="evidence" value="ECO:0007669"/>
    <property type="project" value="UniProtKB-UniRule"/>
</dbReference>
<dbReference type="GO" id="GO:0008360">
    <property type="term" value="P:regulation of cell shape"/>
    <property type="evidence" value="ECO:0007669"/>
    <property type="project" value="UniProtKB-KW"/>
</dbReference>
<dbReference type="Gene3D" id="3.30.465.10">
    <property type="match status" value="1"/>
</dbReference>
<dbReference type="Gene3D" id="3.90.78.10">
    <property type="entry name" value="UDP-N-acetylenolpyruvoylglucosamine reductase, C-terminal domain"/>
    <property type="match status" value="1"/>
</dbReference>
<dbReference type="Gene3D" id="3.30.43.10">
    <property type="entry name" value="Uridine Diphospho-n-acetylenolpyruvylglucosamine Reductase, domain 2"/>
    <property type="match status" value="1"/>
</dbReference>
<dbReference type="HAMAP" id="MF_00037">
    <property type="entry name" value="MurB"/>
    <property type="match status" value="1"/>
</dbReference>
<dbReference type="InterPro" id="IPR016166">
    <property type="entry name" value="FAD-bd_PCMH"/>
</dbReference>
<dbReference type="InterPro" id="IPR036318">
    <property type="entry name" value="FAD-bd_PCMH-like_sf"/>
</dbReference>
<dbReference type="InterPro" id="IPR016167">
    <property type="entry name" value="FAD-bd_PCMH_sub1"/>
</dbReference>
<dbReference type="InterPro" id="IPR016169">
    <property type="entry name" value="FAD-bd_PCMH_sub2"/>
</dbReference>
<dbReference type="InterPro" id="IPR003170">
    <property type="entry name" value="MurB"/>
</dbReference>
<dbReference type="InterPro" id="IPR011601">
    <property type="entry name" value="MurB_C"/>
</dbReference>
<dbReference type="InterPro" id="IPR036635">
    <property type="entry name" value="MurB_C_sf"/>
</dbReference>
<dbReference type="InterPro" id="IPR006094">
    <property type="entry name" value="Oxid_FAD_bind_N"/>
</dbReference>
<dbReference type="NCBIfam" id="TIGR00179">
    <property type="entry name" value="murB"/>
    <property type="match status" value="1"/>
</dbReference>
<dbReference type="NCBIfam" id="NF010480">
    <property type="entry name" value="PRK13905.1"/>
    <property type="match status" value="1"/>
</dbReference>
<dbReference type="PANTHER" id="PTHR21071">
    <property type="entry name" value="UDP-N-ACETYLENOLPYRUVOYLGLUCOSAMINE REDUCTASE"/>
    <property type="match status" value="1"/>
</dbReference>
<dbReference type="PANTHER" id="PTHR21071:SF4">
    <property type="entry name" value="UDP-N-ACETYLENOLPYRUVOYLGLUCOSAMINE REDUCTASE"/>
    <property type="match status" value="1"/>
</dbReference>
<dbReference type="Pfam" id="PF01565">
    <property type="entry name" value="FAD_binding_4"/>
    <property type="match status" value="1"/>
</dbReference>
<dbReference type="Pfam" id="PF02873">
    <property type="entry name" value="MurB_C"/>
    <property type="match status" value="1"/>
</dbReference>
<dbReference type="SUPFAM" id="SSF56176">
    <property type="entry name" value="FAD-binding/transporter-associated domain-like"/>
    <property type="match status" value="1"/>
</dbReference>
<dbReference type="SUPFAM" id="SSF56194">
    <property type="entry name" value="Uridine diphospho-N-Acetylenolpyruvylglucosamine reductase, MurB, C-terminal domain"/>
    <property type="match status" value="1"/>
</dbReference>
<dbReference type="PROSITE" id="PS51387">
    <property type="entry name" value="FAD_PCMH"/>
    <property type="match status" value="1"/>
</dbReference>
<gene>
    <name evidence="1" type="primary">murB</name>
    <name type="ordered locus">COXBURSA331_A0226</name>
</gene>
<protein>
    <recommendedName>
        <fullName evidence="1">UDP-N-acetylenolpyruvoylglucosamine reductase</fullName>
        <ecNumber evidence="1">1.3.1.98</ecNumber>
    </recommendedName>
    <alternativeName>
        <fullName evidence="1">UDP-N-acetylmuramate dehydrogenase</fullName>
    </alternativeName>
</protein>
<accession>A9NA46</accession>
<feature type="chain" id="PRO_1000074522" description="UDP-N-acetylenolpyruvoylglucosamine reductase">
    <location>
        <begin position="1"/>
        <end position="316"/>
    </location>
</feature>
<feature type="domain" description="FAD-binding PCMH-type" evidence="1">
    <location>
        <begin position="27"/>
        <end position="225"/>
    </location>
</feature>
<feature type="active site" evidence="1">
    <location>
        <position position="190"/>
    </location>
</feature>
<feature type="active site" description="Proton donor" evidence="1">
    <location>
        <position position="239"/>
    </location>
</feature>
<feature type="active site" evidence="1">
    <location>
        <position position="309"/>
    </location>
</feature>
<organism>
    <name type="scientific">Coxiella burnetii (strain RSA 331 / Henzerling II)</name>
    <dbReference type="NCBI Taxonomy" id="360115"/>
    <lineage>
        <taxon>Bacteria</taxon>
        <taxon>Pseudomonadati</taxon>
        <taxon>Pseudomonadota</taxon>
        <taxon>Gammaproteobacteria</taxon>
        <taxon>Legionellales</taxon>
        <taxon>Coxiellaceae</taxon>
        <taxon>Coxiella</taxon>
    </lineage>
</organism>
<name>MURB_COXBR</name>